<protein>
    <recommendedName>
        <fullName evidence="1">Imidazole glycerol phosphate synthase subunit HisF</fullName>
        <ecNumber evidence="1">4.3.2.10</ecNumber>
    </recommendedName>
    <alternativeName>
        <fullName evidence="1">IGP synthase cyclase subunit</fullName>
    </alternativeName>
    <alternativeName>
        <fullName evidence="1">IGP synthase subunit HisF</fullName>
    </alternativeName>
    <alternativeName>
        <fullName evidence="1">ImGP synthase subunit HisF</fullName>
        <shortName evidence="1">IGPS subunit HisF</shortName>
    </alternativeName>
</protein>
<feature type="chain" id="PRO_1000213216" description="Imidazole glycerol phosphate synthase subunit HisF">
    <location>
        <begin position="1"/>
        <end position="256"/>
    </location>
</feature>
<feature type="active site" evidence="1">
    <location>
        <position position="12"/>
    </location>
</feature>
<feature type="active site" evidence="1">
    <location>
        <position position="131"/>
    </location>
</feature>
<accession>C3K6V3</accession>
<comment type="function">
    <text evidence="1">IGPS catalyzes the conversion of PRFAR and glutamine to IGP, AICAR and glutamate. The HisF subunit catalyzes the cyclization activity that produces IGP and AICAR from PRFAR using the ammonia provided by the HisH subunit.</text>
</comment>
<comment type="catalytic activity">
    <reaction evidence="1">
        <text>5-[(5-phospho-1-deoxy-D-ribulos-1-ylimino)methylamino]-1-(5-phospho-beta-D-ribosyl)imidazole-4-carboxamide + L-glutamine = D-erythro-1-(imidazol-4-yl)glycerol 3-phosphate + 5-amino-1-(5-phospho-beta-D-ribosyl)imidazole-4-carboxamide + L-glutamate + H(+)</text>
        <dbReference type="Rhea" id="RHEA:24793"/>
        <dbReference type="ChEBI" id="CHEBI:15378"/>
        <dbReference type="ChEBI" id="CHEBI:29985"/>
        <dbReference type="ChEBI" id="CHEBI:58278"/>
        <dbReference type="ChEBI" id="CHEBI:58359"/>
        <dbReference type="ChEBI" id="CHEBI:58475"/>
        <dbReference type="ChEBI" id="CHEBI:58525"/>
        <dbReference type="EC" id="4.3.2.10"/>
    </reaction>
</comment>
<comment type="pathway">
    <text evidence="1">Amino-acid biosynthesis; L-histidine biosynthesis; L-histidine from 5-phospho-alpha-D-ribose 1-diphosphate: step 5/9.</text>
</comment>
<comment type="subunit">
    <text evidence="1">Heterodimer of HisH and HisF.</text>
</comment>
<comment type="subcellular location">
    <subcellularLocation>
        <location evidence="1">Cytoplasm</location>
    </subcellularLocation>
</comment>
<comment type="similarity">
    <text evidence="1">Belongs to the HisA/HisF family.</text>
</comment>
<sequence>MALAKRIIPCLDVDNGRVVKGVKFENIRDAGDPVEIARRYDEQGADEITFLDITASVDGRDTTLHTVERMASQVFIPLTVGGGVRTVQDIRNLLNAGADKVSINTAAVFNPEFVGEAAQHFGSQCIVVAIDAKKVSGPGETPRWEIFTHGGRKPTGLDAVEWAMKMEGLGAGEILLTSMDQDGMKNGFDLGVTRAISDALGIPVIASGGVGNLQHLADGVIEGHASAVLAASIFHFGEYTVPEAKAYMAARGIVVR</sequence>
<organism>
    <name type="scientific">Pseudomonas fluorescens (strain SBW25)</name>
    <dbReference type="NCBI Taxonomy" id="216595"/>
    <lineage>
        <taxon>Bacteria</taxon>
        <taxon>Pseudomonadati</taxon>
        <taxon>Pseudomonadota</taxon>
        <taxon>Gammaproteobacteria</taxon>
        <taxon>Pseudomonadales</taxon>
        <taxon>Pseudomonadaceae</taxon>
        <taxon>Pseudomonas</taxon>
    </lineage>
</organism>
<reference key="1">
    <citation type="journal article" date="2009" name="Genome Biol.">
        <title>Genomic and genetic analyses of diversity and plant interactions of Pseudomonas fluorescens.</title>
        <authorList>
            <person name="Silby M.W."/>
            <person name="Cerdeno-Tarraga A.M."/>
            <person name="Vernikos G.S."/>
            <person name="Giddens S.R."/>
            <person name="Jackson R.W."/>
            <person name="Preston G.M."/>
            <person name="Zhang X.-X."/>
            <person name="Moon C.D."/>
            <person name="Gehrig S.M."/>
            <person name="Godfrey S.A.C."/>
            <person name="Knight C.G."/>
            <person name="Malone J.G."/>
            <person name="Robinson Z."/>
            <person name="Spiers A.J."/>
            <person name="Harris S."/>
            <person name="Challis G.L."/>
            <person name="Yaxley A.M."/>
            <person name="Harris D."/>
            <person name="Seeger K."/>
            <person name="Murphy L."/>
            <person name="Rutter S."/>
            <person name="Squares R."/>
            <person name="Quail M.A."/>
            <person name="Saunders E."/>
            <person name="Mavromatis K."/>
            <person name="Brettin T.S."/>
            <person name="Bentley S.D."/>
            <person name="Hothersall J."/>
            <person name="Stephens E."/>
            <person name="Thomas C.M."/>
            <person name="Parkhill J."/>
            <person name="Levy S.B."/>
            <person name="Rainey P.B."/>
            <person name="Thomson N.R."/>
        </authorList>
    </citation>
    <scope>NUCLEOTIDE SEQUENCE [LARGE SCALE GENOMIC DNA]</scope>
    <source>
        <strain>SBW25</strain>
    </source>
</reference>
<proteinExistence type="inferred from homology"/>
<name>HIS6_PSEFS</name>
<evidence type="ECO:0000255" key="1">
    <source>
        <dbReference type="HAMAP-Rule" id="MF_01013"/>
    </source>
</evidence>
<dbReference type="EC" id="4.3.2.10" evidence="1"/>
<dbReference type="EMBL" id="AM181176">
    <property type="protein sequence ID" value="CAY46608.1"/>
    <property type="molecule type" value="Genomic_DNA"/>
</dbReference>
<dbReference type="RefSeq" id="WP_003171107.1">
    <property type="nucleotide sequence ID" value="NC_012660.1"/>
</dbReference>
<dbReference type="SMR" id="C3K6V3"/>
<dbReference type="STRING" id="294.SRM1_00380"/>
<dbReference type="GeneID" id="97823209"/>
<dbReference type="eggNOG" id="COG0107">
    <property type="taxonomic scope" value="Bacteria"/>
</dbReference>
<dbReference type="HOGENOM" id="CLU_048577_4_0_6"/>
<dbReference type="OrthoDB" id="9781903at2"/>
<dbReference type="UniPathway" id="UPA00031">
    <property type="reaction ID" value="UER00010"/>
</dbReference>
<dbReference type="GO" id="GO:0005737">
    <property type="term" value="C:cytoplasm"/>
    <property type="evidence" value="ECO:0007669"/>
    <property type="project" value="UniProtKB-SubCell"/>
</dbReference>
<dbReference type="GO" id="GO:0000107">
    <property type="term" value="F:imidazoleglycerol-phosphate synthase activity"/>
    <property type="evidence" value="ECO:0007669"/>
    <property type="project" value="UniProtKB-UniRule"/>
</dbReference>
<dbReference type="GO" id="GO:0016829">
    <property type="term" value="F:lyase activity"/>
    <property type="evidence" value="ECO:0007669"/>
    <property type="project" value="UniProtKB-KW"/>
</dbReference>
<dbReference type="GO" id="GO:0000105">
    <property type="term" value="P:L-histidine biosynthetic process"/>
    <property type="evidence" value="ECO:0007669"/>
    <property type="project" value="UniProtKB-UniRule"/>
</dbReference>
<dbReference type="CDD" id="cd04731">
    <property type="entry name" value="HisF"/>
    <property type="match status" value="1"/>
</dbReference>
<dbReference type="FunFam" id="3.20.20.70:FF:000006">
    <property type="entry name" value="Imidazole glycerol phosphate synthase subunit HisF"/>
    <property type="match status" value="1"/>
</dbReference>
<dbReference type="Gene3D" id="3.20.20.70">
    <property type="entry name" value="Aldolase class I"/>
    <property type="match status" value="1"/>
</dbReference>
<dbReference type="HAMAP" id="MF_01013">
    <property type="entry name" value="HisF"/>
    <property type="match status" value="1"/>
</dbReference>
<dbReference type="InterPro" id="IPR013785">
    <property type="entry name" value="Aldolase_TIM"/>
</dbReference>
<dbReference type="InterPro" id="IPR006062">
    <property type="entry name" value="His_biosynth"/>
</dbReference>
<dbReference type="InterPro" id="IPR004651">
    <property type="entry name" value="HisF"/>
</dbReference>
<dbReference type="InterPro" id="IPR050064">
    <property type="entry name" value="IGPS_HisA/HisF"/>
</dbReference>
<dbReference type="InterPro" id="IPR011060">
    <property type="entry name" value="RibuloseP-bd_barrel"/>
</dbReference>
<dbReference type="NCBIfam" id="TIGR00735">
    <property type="entry name" value="hisF"/>
    <property type="match status" value="1"/>
</dbReference>
<dbReference type="PANTHER" id="PTHR21235:SF2">
    <property type="entry name" value="IMIDAZOLE GLYCEROL PHOSPHATE SYNTHASE HISHF"/>
    <property type="match status" value="1"/>
</dbReference>
<dbReference type="PANTHER" id="PTHR21235">
    <property type="entry name" value="IMIDAZOLE GLYCEROL PHOSPHATE SYNTHASE SUBUNIT HISF/H IGP SYNTHASE SUBUNIT HISF/H"/>
    <property type="match status" value="1"/>
</dbReference>
<dbReference type="Pfam" id="PF00977">
    <property type="entry name" value="His_biosynth"/>
    <property type="match status" value="1"/>
</dbReference>
<dbReference type="SUPFAM" id="SSF51366">
    <property type="entry name" value="Ribulose-phoshate binding barrel"/>
    <property type="match status" value="1"/>
</dbReference>
<keyword id="KW-0028">Amino-acid biosynthesis</keyword>
<keyword id="KW-0963">Cytoplasm</keyword>
<keyword id="KW-0368">Histidine biosynthesis</keyword>
<keyword id="KW-0456">Lyase</keyword>
<gene>
    <name evidence="1" type="primary">hisF</name>
    <name type="ordered locus">PFLU_0331</name>
</gene>